<organism>
    <name type="scientific">Nematostella vectensis</name>
    <name type="common">Starlet sea anemone</name>
    <dbReference type="NCBI Taxonomy" id="45351"/>
    <lineage>
        <taxon>Eukaryota</taxon>
        <taxon>Metazoa</taxon>
        <taxon>Cnidaria</taxon>
        <taxon>Anthozoa</taxon>
        <taxon>Hexacorallia</taxon>
        <taxon>Actiniaria</taxon>
        <taxon>Edwardsiidae</taxon>
        <taxon>Nematostella</taxon>
    </lineage>
</organism>
<accession>A7RVK7</accession>
<name>TPPC2_NEMVE</name>
<keyword id="KW-0963">Cytoplasm</keyword>
<keyword id="KW-0256">Endoplasmic reticulum</keyword>
<keyword id="KW-0931">ER-Golgi transport</keyword>
<keyword id="KW-0333">Golgi apparatus</keyword>
<keyword id="KW-1185">Reference proteome</keyword>
<keyword id="KW-0813">Transport</keyword>
<reference key="1">
    <citation type="journal article" date="2007" name="Science">
        <title>Sea anemone genome reveals ancestral eumetazoan gene repertoire and genomic organization.</title>
        <authorList>
            <person name="Putnam N.H."/>
            <person name="Srivastava M."/>
            <person name="Hellsten U."/>
            <person name="Dirks B."/>
            <person name="Chapman J."/>
            <person name="Salamov A."/>
            <person name="Terry A."/>
            <person name="Shapiro H."/>
            <person name="Lindquist E."/>
            <person name="Kapitonov V.V."/>
            <person name="Jurka J."/>
            <person name="Genikhovich G."/>
            <person name="Grigoriev I.V."/>
            <person name="Lucas S.M."/>
            <person name="Steele R.E."/>
            <person name="Finnerty J.R."/>
            <person name="Technau U."/>
            <person name="Martindale M.Q."/>
            <person name="Rokhsar D.S."/>
        </authorList>
    </citation>
    <scope>NUCLEOTIDE SEQUENCE [LARGE SCALE GENOMIC DNA]</scope>
    <source>
        <strain>CH2 X CH6</strain>
    </source>
</reference>
<feature type="chain" id="PRO_0000412459" description="Probable trafficking protein particle complex subunit 2">
    <location>
        <begin position="1"/>
        <end position="153"/>
    </location>
</feature>
<evidence type="ECO:0000250" key="1"/>
<evidence type="ECO:0000305" key="2"/>
<gene>
    <name type="ORF">v1g94938</name>
</gene>
<comment type="function">
    <text evidence="1">May play a role in vesicular transport from endoplasmic reticulum to Golgi.</text>
</comment>
<comment type="subunit">
    <text evidence="1">Part of the multisubunit TRAPP (transport protein particle) complex.</text>
</comment>
<comment type="subcellular location">
    <subcellularLocation>
        <location evidence="1">Cytoplasm</location>
        <location evidence="1">Perinuclear region</location>
    </subcellularLocation>
    <subcellularLocation>
        <location evidence="1">Endoplasmic reticulum</location>
    </subcellularLocation>
    <subcellularLocation>
        <location evidence="1">Golgi apparatus</location>
    </subcellularLocation>
</comment>
<comment type="similarity">
    <text evidence="2">Belongs to the TRAPP small subunits family. Sedlin subfamily.</text>
</comment>
<protein>
    <recommendedName>
        <fullName>Probable trafficking protein particle complex subunit 2</fullName>
    </recommendedName>
</protein>
<dbReference type="EMBL" id="DS469544">
    <property type="protein sequence ID" value="EDO44473.1"/>
    <property type="molecule type" value="Genomic_DNA"/>
</dbReference>
<dbReference type="RefSeq" id="XP_001636536.1">
    <property type="nucleotide sequence ID" value="XM_001636486.1"/>
</dbReference>
<dbReference type="SMR" id="A7RVK7"/>
<dbReference type="FunCoup" id="A7RVK7">
    <property type="interactions" value="317"/>
</dbReference>
<dbReference type="STRING" id="45351.A7RVK7"/>
<dbReference type="EnsemblMetazoa" id="EDO44473">
    <property type="protein sequence ID" value="EDO44473"/>
    <property type="gene ID" value="NEMVEDRAFT_v1g94938"/>
</dbReference>
<dbReference type="eggNOG" id="KOG3487">
    <property type="taxonomic scope" value="Eukaryota"/>
</dbReference>
<dbReference type="HOGENOM" id="CLU_085828_0_2_1"/>
<dbReference type="InParanoid" id="A7RVK7"/>
<dbReference type="OMA" id="RYMNQFI"/>
<dbReference type="PhylomeDB" id="A7RVK7"/>
<dbReference type="Proteomes" id="UP000001593">
    <property type="component" value="Unassembled WGS sequence"/>
</dbReference>
<dbReference type="GO" id="GO:0005737">
    <property type="term" value="C:cytoplasm"/>
    <property type="evidence" value="ECO:0000318"/>
    <property type="project" value="GO_Central"/>
</dbReference>
<dbReference type="GO" id="GO:0005783">
    <property type="term" value="C:endoplasmic reticulum"/>
    <property type="evidence" value="ECO:0007669"/>
    <property type="project" value="UniProtKB-SubCell"/>
</dbReference>
<dbReference type="GO" id="GO:0005794">
    <property type="term" value="C:Golgi apparatus"/>
    <property type="evidence" value="ECO:0007669"/>
    <property type="project" value="UniProtKB-SubCell"/>
</dbReference>
<dbReference type="GO" id="GO:0005634">
    <property type="term" value="C:nucleus"/>
    <property type="evidence" value="ECO:0000318"/>
    <property type="project" value="GO_Central"/>
</dbReference>
<dbReference type="GO" id="GO:0048471">
    <property type="term" value="C:perinuclear region of cytoplasm"/>
    <property type="evidence" value="ECO:0007669"/>
    <property type="project" value="UniProtKB-SubCell"/>
</dbReference>
<dbReference type="GO" id="GO:0030008">
    <property type="term" value="C:TRAPP complex"/>
    <property type="evidence" value="ECO:0000318"/>
    <property type="project" value="GO_Central"/>
</dbReference>
<dbReference type="GO" id="GO:0006888">
    <property type="term" value="P:endoplasmic reticulum to Golgi vesicle-mediated transport"/>
    <property type="evidence" value="ECO:0000318"/>
    <property type="project" value="GO_Central"/>
</dbReference>
<dbReference type="CDD" id="cd14825">
    <property type="entry name" value="TRAPPC2_sedlin"/>
    <property type="match status" value="1"/>
</dbReference>
<dbReference type="Gene3D" id="3.30.450.70">
    <property type="match status" value="1"/>
</dbReference>
<dbReference type="InterPro" id="IPR011012">
    <property type="entry name" value="Longin-like_dom_sf"/>
</dbReference>
<dbReference type="InterPro" id="IPR006722">
    <property type="entry name" value="Sedlin"/>
</dbReference>
<dbReference type="PANTHER" id="PTHR12403">
    <property type="entry name" value="TRAFFICKING PROTEIN PARTICLE COMPLEX SUBUNIT 2"/>
    <property type="match status" value="1"/>
</dbReference>
<dbReference type="Pfam" id="PF04628">
    <property type="entry name" value="Sedlin_N"/>
    <property type="match status" value="2"/>
</dbReference>
<dbReference type="SUPFAM" id="SSF64356">
    <property type="entry name" value="SNARE-like"/>
    <property type="match status" value="1"/>
</dbReference>
<sequence length="153" mass="18136">MLGNYYFAIVGHYDNPVYEKEFNQQMKMDSNDHRHLNQFIVHAALDLVDESMWGTTGMYLKSVDKFNEWFVSAFDPPLSWIIDPQFFLDLTSWMRFMMLHDVKNDDGIKNFFSDVYETFIKVLMNPFYEINSKIKSANFDKKVLLAAKKHILP</sequence>
<proteinExistence type="inferred from homology"/>